<evidence type="ECO:0000305" key="1"/>
<organismHost>
    <name type="scientific">Homo sapiens</name>
    <name type="common">Human</name>
    <dbReference type="NCBI Taxonomy" id="9606"/>
</organismHost>
<gene>
    <name type="primary">UL36</name>
</gene>
<feature type="chain" id="PRO_0000115319" description="Uncharacterized protein UL36">
    <location>
        <begin position="1"/>
        <end position="476"/>
    </location>
</feature>
<organism>
    <name type="scientific">Human cytomegalovirus (strain AD169)</name>
    <name type="common">HHV-5</name>
    <name type="synonym">Human herpesvirus 5</name>
    <dbReference type="NCBI Taxonomy" id="10360"/>
    <lineage>
        <taxon>Viruses</taxon>
        <taxon>Duplodnaviria</taxon>
        <taxon>Heunggongvirae</taxon>
        <taxon>Peploviricota</taxon>
        <taxon>Herviviricetes</taxon>
        <taxon>Herpesvirales</taxon>
        <taxon>Orthoherpesviridae</taxon>
        <taxon>Betaherpesvirinae</taxon>
        <taxon>Cytomegalovirus</taxon>
        <taxon>Cytomegalovirus humanbeta5</taxon>
        <taxon>Human cytomegalovirus</taxon>
    </lineage>
</organism>
<dbReference type="EMBL" id="X17403">
    <property type="protein sequence ID" value="CAA35395.1"/>
    <property type="molecule type" value="Genomic_DNA"/>
</dbReference>
<dbReference type="EMBL" id="BK000394">
    <property type="protein sequence ID" value="DAA00141.1"/>
    <property type="molecule type" value="Genomic_DNA"/>
</dbReference>
<dbReference type="PIR" id="S09799">
    <property type="entry name" value="S09799"/>
</dbReference>
<dbReference type="Reactome" id="R-HSA-5357786">
    <property type="pathway name" value="TNFR1-induced proapoptotic signaling"/>
</dbReference>
<dbReference type="Reactome" id="R-HSA-5357905">
    <property type="pathway name" value="Regulation of TNFR1 signaling"/>
</dbReference>
<dbReference type="Reactome" id="R-HSA-9686347">
    <property type="pathway name" value="Microbial modulation of RIPK1-mediated regulated necrosis"/>
</dbReference>
<dbReference type="Proteomes" id="UP000008991">
    <property type="component" value="Segment"/>
</dbReference>
<dbReference type="Proteomes" id="UP000008992">
    <property type="component" value="Segment"/>
</dbReference>
<dbReference type="InterPro" id="IPR003360">
    <property type="entry name" value="US22-like"/>
</dbReference>
<dbReference type="Pfam" id="PF02393">
    <property type="entry name" value="US22"/>
    <property type="match status" value="2"/>
</dbReference>
<comment type="similarity">
    <text evidence="1">Belongs to the herpesviridae US22 family.</text>
</comment>
<proteinExistence type="inferred from homology"/>
<name>UL36_HCMVA</name>
<keyword id="KW-1185">Reference proteome</keyword>
<accession>P16767</accession>
<accession>Q7M6P7</accession>
<sequence length="476" mass="54982">MDDLRDTLMAYGCIAIRAGDFNGLNDFLEQECGTRLHVAWPERCFIQLRSRSALGPFVGKMGTVCSQGAYVCCQEYLHPFGFVEGPGFMRYQLIVLIGQRGGIYCYDDLRDCVYELAPTMKDFLRNGFRHRDHFHTMRDYQRPMVQYDDYWNAVMLYRGDVESLSAEVTKRGYASYTIDDPFDECPDTHFAFWTHNTEVMKFKETSFSVVRAGGSIQTMELMIRTVPRITCYHQLLGALGHEVPERKEFLVRQYVLVDTFGVVYGYDPAMDAVYRLAEDVVMFTCVMGKKGHRNHRFSGRREAIVRLEKTPTCQHPKKTPDPMIMFDEDDDDELSLPRNVMTHEEAESRLYDAITENLMHCVKLVTTDSPLATHLWPQELQALCDSPALSLCTDDVEGVRQKLRARTGSLHHFELSYRFHDEDPETYMGFLWDIPSCDRCVRRRRFKVCDVGRRHIIPGAANGMPPLTPPHVYMNN</sequence>
<reference key="1">
    <citation type="journal article" date="1990" name="Curr. Top. Microbiol. Immunol.">
        <title>Analysis of the protein-coding content of the sequence of human cytomegalovirus strain AD169.</title>
        <authorList>
            <person name="Chee M.S."/>
            <person name="Bankier A.T."/>
            <person name="Beck S."/>
            <person name="Bohni R."/>
            <person name="Brown C.M."/>
            <person name="Cerny R."/>
            <person name="Horsnell T."/>
            <person name="Hutchison C.A. III"/>
            <person name="Kouzarides T."/>
            <person name="Martignetti J.A."/>
            <person name="Preddie E."/>
            <person name="Satchwell S.C."/>
            <person name="Tomlinson P."/>
            <person name="Weston K.M."/>
            <person name="Barrell B.G."/>
        </authorList>
    </citation>
    <scope>NUCLEOTIDE SEQUENCE [LARGE SCALE GENOMIC DNA]</scope>
</reference>
<reference key="2">
    <citation type="journal article" date="2003" name="J. Gen. Virol.">
        <title>The human cytomegalovirus genome revisited: comparison with the chimpanzee cytomegalovirus genome.</title>
        <authorList>
            <person name="Davison A.J."/>
            <person name="Dolan A."/>
            <person name="Akter P."/>
            <person name="Addison C."/>
            <person name="Dargan D.J."/>
            <person name="Alcendor D.J."/>
            <person name="McGeoch D.J."/>
            <person name="Hayward G.S."/>
        </authorList>
    </citation>
    <scope>GENOME REANNOTATION</scope>
</reference>
<reference key="3">
    <citation type="journal article" date="2003" name="J. Gen. Virol.">
        <authorList>
            <person name="Davison A.J."/>
            <person name="Dolan A."/>
            <person name="Akter P."/>
            <person name="Addison C."/>
            <person name="Dargan D.J."/>
            <person name="Alcendor D.J."/>
            <person name="McGeoch D.J."/>
            <person name="Hayward G.S."/>
        </authorList>
    </citation>
    <scope>ERRATUM OF PUBMED:12533697</scope>
</reference>
<protein>
    <recommendedName>
        <fullName>Uncharacterized protein UL36</fullName>
    </recommendedName>
</protein>